<gene>
    <name evidence="1" type="primary">argB</name>
    <name type="ordered locus">SYNW1780</name>
</gene>
<organism>
    <name type="scientific">Parasynechococcus marenigrum (strain WH8102)</name>
    <dbReference type="NCBI Taxonomy" id="84588"/>
    <lineage>
        <taxon>Bacteria</taxon>
        <taxon>Bacillati</taxon>
        <taxon>Cyanobacteriota</taxon>
        <taxon>Cyanophyceae</taxon>
        <taxon>Synechococcales</taxon>
        <taxon>Prochlorococcaceae</taxon>
        <taxon>Parasynechococcus</taxon>
        <taxon>Parasynechococcus marenigrum</taxon>
    </lineage>
</organism>
<sequence length="293" mass="31001">MPEPIQSGDDALRVSVLSEALPYIQRFSGRRIVIKYGGAAMAHAELREAVFRDLALLACVGVQPVVVHGGGPEINQWLKRLEIPAEFRDGLRVTDADTMDVVEMVLVGRVNKQIVNGLNQLGTRAVGLSGSDGSLVEARPWGDGSHGLVGDVARVNPDVLEPLLERGYVPVISSVAATPGDGRAHNINADTVAGELAAALEAEKLILLTDTPGILRDRDNPNSLIRKLRLSEARQLIDDGVVAGGMTPKTECCIRALAQGVSAAHIVDGRVPHALLLEVFTDAGIGTMVVGRG</sequence>
<reference key="1">
    <citation type="journal article" date="2003" name="Nature">
        <title>The genome of a motile marine Synechococcus.</title>
        <authorList>
            <person name="Palenik B."/>
            <person name="Brahamsha B."/>
            <person name="Larimer F.W."/>
            <person name="Land M.L."/>
            <person name="Hauser L."/>
            <person name="Chain P."/>
            <person name="Lamerdin J.E."/>
            <person name="Regala W."/>
            <person name="Allen E.E."/>
            <person name="McCarren J."/>
            <person name="Paulsen I.T."/>
            <person name="Dufresne A."/>
            <person name="Partensky F."/>
            <person name="Webb E.A."/>
            <person name="Waterbury J."/>
        </authorList>
    </citation>
    <scope>NUCLEOTIDE SEQUENCE [LARGE SCALE GENOMIC DNA]</scope>
    <source>
        <strain>WH8102</strain>
    </source>
</reference>
<accession>Q7U5C7</accession>
<proteinExistence type="inferred from homology"/>
<comment type="function">
    <text evidence="1">Catalyzes the ATP-dependent phosphorylation of N-acetyl-L-glutamate.</text>
</comment>
<comment type="catalytic activity">
    <reaction evidence="1">
        <text>N-acetyl-L-glutamate + ATP = N-acetyl-L-glutamyl 5-phosphate + ADP</text>
        <dbReference type="Rhea" id="RHEA:14629"/>
        <dbReference type="ChEBI" id="CHEBI:30616"/>
        <dbReference type="ChEBI" id="CHEBI:44337"/>
        <dbReference type="ChEBI" id="CHEBI:57936"/>
        <dbReference type="ChEBI" id="CHEBI:456216"/>
        <dbReference type="EC" id="2.7.2.8"/>
    </reaction>
</comment>
<comment type="pathway">
    <text evidence="1">Amino-acid biosynthesis; L-arginine biosynthesis; N(2)-acetyl-L-ornithine from L-glutamate: step 2/4.</text>
</comment>
<comment type="subcellular location">
    <subcellularLocation>
        <location evidence="1">Cytoplasm</location>
    </subcellularLocation>
</comment>
<comment type="similarity">
    <text evidence="1">Belongs to the acetylglutamate kinase family. ArgB subfamily.</text>
</comment>
<protein>
    <recommendedName>
        <fullName evidence="1">Acetylglutamate kinase</fullName>
        <ecNumber evidence="1">2.7.2.8</ecNumber>
    </recommendedName>
    <alternativeName>
        <fullName evidence="1">N-acetyl-L-glutamate 5-phosphotransferase</fullName>
    </alternativeName>
    <alternativeName>
        <fullName evidence="1">NAG kinase</fullName>
        <shortName evidence="1">NAGK</shortName>
    </alternativeName>
</protein>
<feature type="chain" id="PRO_0000112676" description="Acetylglutamate kinase">
    <location>
        <begin position="1"/>
        <end position="293"/>
    </location>
</feature>
<feature type="binding site" evidence="1">
    <location>
        <begin position="70"/>
        <end position="71"/>
    </location>
    <ligand>
        <name>substrate</name>
    </ligand>
</feature>
<feature type="binding site" evidence="1">
    <location>
        <position position="92"/>
    </location>
    <ligand>
        <name>substrate</name>
    </ligand>
</feature>
<feature type="binding site" evidence="1">
    <location>
        <position position="186"/>
    </location>
    <ligand>
        <name>substrate</name>
    </ligand>
</feature>
<feature type="site" description="Transition state stabilizer" evidence="1">
    <location>
        <position position="35"/>
    </location>
</feature>
<feature type="site" description="Transition state stabilizer" evidence="1">
    <location>
        <position position="249"/>
    </location>
</feature>
<dbReference type="EC" id="2.7.2.8" evidence="1"/>
<dbReference type="EMBL" id="BX569693">
    <property type="protein sequence ID" value="CAE08295.1"/>
    <property type="molecule type" value="Genomic_DNA"/>
</dbReference>
<dbReference type="RefSeq" id="WP_011128640.1">
    <property type="nucleotide sequence ID" value="NC_005070.1"/>
</dbReference>
<dbReference type="SMR" id="Q7U5C7"/>
<dbReference type="STRING" id="84588.SYNW1780"/>
<dbReference type="KEGG" id="syw:SYNW1780"/>
<dbReference type="eggNOG" id="COG0548">
    <property type="taxonomic scope" value="Bacteria"/>
</dbReference>
<dbReference type="HOGENOM" id="CLU_053680_0_0_3"/>
<dbReference type="UniPathway" id="UPA00068">
    <property type="reaction ID" value="UER00107"/>
</dbReference>
<dbReference type="Proteomes" id="UP000001422">
    <property type="component" value="Chromosome"/>
</dbReference>
<dbReference type="GO" id="GO:0005737">
    <property type="term" value="C:cytoplasm"/>
    <property type="evidence" value="ECO:0007669"/>
    <property type="project" value="UniProtKB-SubCell"/>
</dbReference>
<dbReference type="GO" id="GO:0003991">
    <property type="term" value="F:acetylglutamate kinase activity"/>
    <property type="evidence" value="ECO:0007669"/>
    <property type="project" value="UniProtKB-UniRule"/>
</dbReference>
<dbReference type="GO" id="GO:0005524">
    <property type="term" value="F:ATP binding"/>
    <property type="evidence" value="ECO:0007669"/>
    <property type="project" value="UniProtKB-UniRule"/>
</dbReference>
<dbReference type="GO" id="GO:0042450">
    <property type="term" value="P:arginine biosynthetic process via ornithine"/>
    <property type="evidence" value="ECO:0007669"/>
    <property type="project" value="UniProtKB-UniRule"/>
</dbReference>
<dbReference type="GO" id="GO:0006526">
    <property type="term" value="P:L-arginine biosynthetic process"/>
    <property type="evidence" value="ECO:0007669"/>
    <property type="project" value="UniProtKB-UniPathway"/>
</dbReference>
<dbReference type="CDD" id="cd04250">
    <property type="entry name" value="AAK_NAGK-C"/>
    <property type="match status" value="1"/>
</dbReference>
<dbReference type="FunFam" id="3.40.1160.10:FF:000004">
    <property type="entry name" value="Acetylglutamate kinase"/>
    <property type="match status" value="1"/>
</dbReference>
<dbReference type="Gene3D" id="3.40.1160.10">
    <property type="entry name" value="Acetylglutamate kinase-like"/>
    <property type="match status" value="1"/>
</dbReference>
<dbReference type="HAMAP" id="MF_00082">
    <property type="entry name" value="ArgB"/>
    <property type="match status" value="1"/>
</dbReference>
<dbReference type="InterPro" id="IPR036393">
    <property type="entry name" value="AceGlu_kinase-like_sf"/>
</dbReference>
<dbReference type="InterPro" id="IPR004662">
    <property type="entry name" value="AcgluKinase_fam"/>
</dbReference>
<dbReference type="InterPro" id="IPR037528">
    <property type="entry name" value="ArgB"/>
</dbReference>
<dbReference type="InterPro" id="IPR001048">
    <property type="entry name" value="Asp/Glu/Uridylate_kinase"/>
</dbReference>
<dbReference type="InterPro" id="IPR001057">
    <property type="entry name" value="Glu/AcGlu_kinase"/>
</dbReference>
<dbReference type="InterPro" id="IPR041727">
    <property type="entry name" value="NAGK-C"/>
</dbReference>
<dbReference type="NCBIfam" id="TIGR00761">
    <property type="entry name" value="argB"/>
    <property type="match status" value="1"/>
</dbReference>
<dbReference type="PANTHER" id="PTHR23342">
    <property type="entry name" value="N-ACETYLGLUTAMATE SYNTHASE"/>
    <property type="match status" value="1"/>
</dbReference>
<dbReference type="PANTHER" id="PTHR23342:SF0">
    <property type="entry name" value="N-ACETYLGLUTAMATE SYNTHASE, MITOCHONDRIAL"/>
    <property type="match status" value="1"/>
</dbReference>
<dbReference type="Pfam" id="PF00696">
    <property type="entry name" value="AA_kinase"/>
    <property type="match status" value="1"/>
</dbReference>
<dbReference type="PIRSF" id="PIRSF000728">
    <property type="entry name" value="NAGK"/>
    <property type="match status" value="1"/>
</dbReference>
<dbReference type="PRINTS" id="PR00474">
    <property type="entry name" value="GLU5KINASE"/>
</dbReference>
<dbReference type="SUPFAM" id="SSF53633">
    <property type="entry name" value="Carbamate kinase-like"/>
    <property type="match status" value="1"/>
</dbReference>
<keyword id="KW-0028">Amino-acid biosynthesis</keyword>
<keyword id="KW-0055">Arginine biosynthesis</keyword>
<keyword id="KW-0067">ATP-binding</keyword>
<keyword id="KW-0963">Cytoplasm</keyword>
<keyword id="KW-0418">Kinase</keyword>
<keyword id="KW-0547">Nucleotide-binding</keyword>
<keyword id="KW-0808">Transferase</keyword>
<evidence type="ECO:0000255" key="1">
    <source>
        <dbReference type="HAMAP-Rule" id="MF_00082"/>
    </source>
</evidence>
<name>ARGB_PARMW</name>